<sequence>MDETSPRSIDIESLIPNLMIIIFGLVGLTGNAIVLWLLGFCLHRNAFLVYILNLALADFLFLLCHFINSAMFLLKVPIPNGIFVYCFYTIKMVLYITGLSMLSAISTERCLSVLCPIWYHCRRPEHTSTVMCAVIWIFSVLICILKEYFCDFFGTKLGNYYVCQASNFFMGAYLMFLFVVLCLSTLALLARLFCGAEKMKFTRLFVTIMLTILVFLLCGLPWGFFWFLLIWIKGGFSVLDYRLYLASIVLTVVNSCANPIIYFFVGSFRHRLKHQTLKMVLQSALQDTPETHENMVEMSRIKAEQ</sequence>
<name>MRGA7_MOUSE</name>
<keyword id="KW-1003">Cell membrane</keyword>
<keyword id="KW-0297">G-protein coupled receptor</keyword>
<keyword id="KW-0472">Membrane</keyword>
<keyword id="KW-0675">Receptor</keyword>
<keyword id="KW-1185">Reference proteome</keyword>
<keyword id="KW-0807">Transducer</keyword>
<keyword id="KW-0812">Transmembrane</keyword>
<keyword id="KW-1133">Transmembrane helix</keyword>
<dbReference type="EMBL" id="AY042197">
    <property type="protein sequence ID" value="AAK91793.1"/>
    <property type="molecule type" value="Genomic_DNA"/>
</dbReference>
<dbReference type="RefSeq" id="NP_997418.1">
    <property type="nucleotide sequence ID" value="NM_207535.1"/>
</dbReference>
<dbReference type="SMR" id="Q91ZC5"/>
<dbReference type="FunCoup" id="Q91ZC5">
    <property type="interactions" value="40"/>
</dbReference>
<dbReference type="iPTMnet" id="Q91ZC5"/>
<dbReference type="PhosphoSitePlus" id="Q91ZC5"/>
<dbReference type="DNASU" id="404236"/>
<dbReference type="GeneID" id="404236"/>
<dbReference type="KEGG" id="mmu:404236"/>
<dbReference type="AGR" id="MGI:3033109"/>
<dbReference type="CTD" id="404236"/>
<dbReference type="MGI" id="MGI:3033109">
    <property type="gene designation" value="Mrgpra7"/>
</dbReference>
<dbReference type="InParanoid" id="Q91ZC5"/>
<dbReference type="PhylomeDB" id="Q91ZC5"/>
<dbReference type="PRO" id="PR:Q91ZC5"/>
<dbReference type="Proteomes" id="UP000000589">
    <property type="component" value="Unplaced"/>
</dbReference>
<dbReference type="RNAct" id="Q91ZC5">
    <property type="molecule type" value="protein"/>
</dbReference>
<dbReference type="GO" id="GO:0005886">
    <property type="term" value="C:plasma membrane"/>
    <property type="evidence" value="ECO:0007669"/>
    <property type="project" value="UniProtKB-SubCell"/>
</dbReference>
<dbReference type="GO" id="GO:0004930">
    <property type="term" value="F:G protein-coupled receptor activity"/>
    <property type="evidence" value="ECO:0007669"/>
    <property type="project" value="UniProtKB-KW"/>
</dbReference>
<dbReference type="CDD" id="cd15105">
    <property type="entry name" value="7tmA_MrgprA"/>
    <property type="match status" value="1"/>
</dbReference>
<dbReference type="FunFam" id="1.20.1070.10:FF:000140">
    <property type="entry name" value="Mas-related G-protein coupled receptor member X2"/>
    <property type="match status" value="1"/>
</dbReference>
<dbReference type="Gene3D" id="1.20.1070.10">
    <property type="entry name" value="Rhodopsin 7-helix transmembrane proteins"/>
    <property type="match status" value="1"/>
</dbReference>
<dbReference type="InterPro" id="IPR000276">
    <property type="entry name" value="GPCR_Rhodpsn"/>
</dbReference>
<dbReference type="InterPro" id="IPR017452">
    <property type="entry name" value="GPCR_Rhodpsn_7TM"/>
</dbReference>
<dbReference type="InterPro" id="IPR026233">
    <property type="entry name" value="MRGPCRA"/>
</dbReference>
<dbReference type="InterPro" id="IPR026234">
    <property type="entry name" value="MRGPCRFAMILY"/>
</dbReference>
<dbReference type="PANTHER" id="PTHR11334">
    <property type="entry name" value="MAS-RELATED G-PROTEIN COUPLED RECEPTOR"/>
    <property type="match status" value="1"/>
</dbReference>
<dbReference type="PANTHER" id="PTHR11334:SF33">
    <property type="entry name" value="MAS-RELATED GPR, MEMBER A2A-RELATED"/>
    <property type="match status" value="1"/>
</dbReference>
<dbReference type="Pfam" id="PF00001">
    <property type="entry name" value="7tm_1"/>
    <property type="match status" value="1"/>
</dbReference>
<dbReference type="PRINTS" id="PR00237">
    <property type="entry name" value="GPCRRHODOPSN"/>
</dbReference>
<dbReference type="PRINTS" id="PR02109">
    <property type="entry name" value="MRGPCRA"/>
</dbReference>
<dbReference type="PRINTS" id="PR02108">
    <property type="entry name" value="MRGPCRFAMILY"/>
</dbReference>
<dbReference type="SUPFAM" id="SSF81321">
    <property type="entry name" value="Family A G protein-coupled receptor-like"/>
    <property type="match status" value="1"/>
</dbReference>
<dbReference type="PROSITE" id="PS00237">
    <property type="entry name" value="G_PROTEIN_RECEP_F1_1"/>
    <property type="match status" value="1"/>
</dbReference>
<dbReference type="PROSITE" id="PS50262">
    <property type="entry name" value="G_PROTEIN_RECEP_F1_2"/>
    <property type="match status" value="1"/>
</dbReference>
<accession>Q91ZC5</accession>
<proteinExistence type="evidence at transcript level"/>
<reference key="1">
    <citation type="journal article" date="2001" name="Cell">
        <title>A diverse family of GPCRs expressed in specific subsets of nociceptive sensory neurons.</title>
        <authorList>
            <person name="Dong X."/>
            <person name="Han S.-K."/>
            <person name="Zylka M.J."/>
            <person name="Simon M.I."/>
            <person name="Anderson D.J."/>
        </authorList>
    </citation>
    <scope>NUCLEOTIDE SEQUENCE [GENOMIC DNA]</scope>
    <scope>TISSUE SPECIFICITY</scope>
    <source>
        <strain>129/SvJ</strain>
    </source>
</reference>
<organism>
    <name type="scientific">Mus musculus</name>
    <name type="common">Mouse</name>
    <dbReference type="NCBI Taxonomy" id="10090"/>
    <lineage>
        <taxon>Eukaryota</taxon>
        <taxon>Metazoa</taxon>
        <taxon>Chordata</taxon>
        <taxon>Craniata</taxon>
        <taxon>Vertebrata</taxon>
        <taxon>Euteleostomi</taxon>
        <taxon>Mammalia</taxon>
        <taxon>Eutheria</taxon>
        <taxon>Euarchontoglires</taxon>
        <taxon>Glires</taxon>
        <taxon>Rodentia</taxon>
        <taxon>Myomorpha</taxon>
        <taxon>Muroidea</taxon>
        <taxon>Muridae</taxon>
        <taxon>Murinae</taxon>
        <taxon>Mus</taxon>
        <taxon>Mus</taxon>
    </lineage>
</organism>
<evidence type="ECO:0000250" key="1"/>
<evidence type="ECO:0000255" key="2"/>
<evidence type="ECO:0000255" key="3">
    <source>
        <dbReference type="PROSITE-ProRule" id="PRU00521"/>
    </source>
</evidence>
<evidence type="ECO:0000269" key="4">
    <source>
    </source>
</evidence>
<protein>
    <recommendedName>
        <fullName>Mas-related G-protein coupled receptor member A7</fullName>
    </recommendedName>
</protein>
<comment type="function">
    <text evidence="1">Orphan receptor. May be a receptor for RFamide-family neuropeptides such as NPFF and NPAF, which are analgesic in vivo. May regulate nociceptor function and/or development, including the sensation or modulation of pain (By similarity).</text>
</comment>
<comment type="subcellular location">
    <subcellularLocation>
        <location>Cell membrane</location>
        <topology>Multi-pass membrane protein</topology>
    </subcellularLocation>
</comment>
<comment type="tissue specificity">
    <text evidence="4">Expressed in a subset of sensory neurons that includes nociceptors. Expressed in the subclass of non-peptidergic sensory neurons that are IB4(+) and VR1(-).</text>
</comment>
<comment type="similarity">
    <text evidence="3">Belongs to the G-protein coupled receptor 1 family. Mas subfamily.</text>
</comment>
<gene>
    <name type="primary">Mrgpra7</name>
    <name type="synonym">Mrga7</name>
</gene>
<feature type="chain" id="PRO_0000069753" description="Mas-related G-protein coupled receptor member A7">
    <location>
        <begin position="1"/>
        <end position="305"/>
    </location>
</feature>
<feature type="topological domain" description="Extracellular" evidence="2">
    <location>
        <begin position="1"/>
        <end position="17"/>
    </location>
</feature>
<feature type="transmembrane region" description="Helical; Name=1" evidence="2">
    <location>
        <begin position="18"/>
        <end position="38"/>
    </location>
</feature>
<feature type="topological domain" description="Cytoplasmic" evidence="2">
    <location>
        <begin position="39"/>
        <end position="46"/>
    </location>
</feature>
<feature type="transmembrane region" description="Helical; Name=2" evidence="2">
    <location>
        <begin position="47"/>
        <end position="67"/>
    </location>
</feature>
<feature type="topological domain" description="Extracellular" evidence="2">
    <location>
        <begin position="68"/>
        <end position="81"/>
    </location>
</feature>
<feature type="transmembrane region" description="Helical; Name=3" evidence="2">
    <location>
        <begin position="82"/>
        <end position="102"/>
    </location>
</feature>
<feature type="topological domain" description="Cytoplasmic" evidence="2">
    <location>
        <begin position="103"/>
        <end position="129"/>
    </location>
</feature>
<feature type="transmembrane region" description="Helical; Name=4" evidence="2">
    <location>
        <begin position="130"/>
        <end position="150"/>
    </location>
</feature>
<feature type="topological domain" description="Extracellular" evidence="2">
    <location>
        <begin position="151"/>
        <end position="167"/>
    </location>
</feature>
<feature type="transmembrane region" description="Helical; Name=5" evidence="2">
    <location>
        <begin position="168"/>
        <end position="188"/>
    </location>
</feature>
<feature type="topological domain" description="Cytoplasmic" evidence="2">
    <location>
        <begin position="189"/>
        <end position="211"/>
    </location>
</feature>
<feature type="transmembrane region" description="Helical; Name=6" evidence="2">
    <location>
        <begin position="212"/>
        <end position="232"/>
    </location>
</feature>
<feature type="topological domain" description="Extracellular" evidence="2">
    <location>
        <begin position="233"/>
        <end position="244"/>
    </location>
</feature>
<feature type="transmembrane region" description="Helical; Name=7" evidence="2">
    <location>
        <begin position="245"/>
        <end position="265"/>
    </location>
</feature>
<feature type="topological domain" description="Cytoplasmic" evidence="2">
    <location>
        <begin position="266"/>
        <end position="305"/>
    </location>
</feature>